<organism>
    <name type="scientific">Methanocaldococcus jannaschii (strain ATCC 43067 / DSM 2661 / JAL-1 / JCM 10045 / NBRC 100440)</name>
    <name type="common">Methanococcus jannaschii</name>
    <dbReference type="NCBI Taxonomy" id="243232"/>
    <lineage>
        <taxon>Archaea</taxon>
        <taxon>Methanobacteriati</taxon>
        <taxon>Methanobacteriota</taxon>
        <taxon>Methanomada group</taxon>
        <taxon>Methanococci</taxon>
        <taxon>Methanococcales</taxon>
        <taxon>Methanocaldococcaceae</taxon>
        <taxon>Methanocaldococcus</taxon>
    </lineage>
</organism>
<accession>Q57559</accession>
<proteinExistence type="predicted"/>
<reference key="1">
    <citation type="journal article" date="1996" name="Science">
        <title>Complete genome sequence of the methanogenic archaeon, Methanococcus jannaschii.</title>
        <authorList>
            <person name="Bult C.J."/>
            <person name="White O."/>
            <person name="Olsen G.J."/>
            <person name="Zhou L."/>
            <person name="Fleischmann R.D."/>
            <person name="Sutton G.G."/>
            <person name="Blake J.A."/>
            <person name="FitzGerald L.M."/>
            <person name="Clayton R.A."/>
            <person name="Gocayne J.D."/>
            <person name="Kerlavage A.R."/>
            <person name="Dougherty B.A."/>
            <person name="Tomb J.-F."/>
            <person name="Adams M.D."/>
            <person name="Reich C.I."/>
            <person name="Overbeek R."/>
            <person name="Kirkness E.F."/>
            <person name="Weinstock K.G."/>
            <person name="Merrick J.M."/>
            <person name="Glodek A."/>
            <person name="Scott J.L."/>
            <person name="Geoghagen N.S.M."/>
            <person name="Weidman J.F."/>
            <person name="Fuhrmann J.L."/>
            <person name="Nguyen D."/>
            <person name="Utterback T.R."/>
            <person name="Kelley J.M."/>
            <person name="Peterson J.D."/>
            <person name="Sadow P.W."/>
            <person name="Hanna M.C."/>
            <person name="Cotton M.D."/>
            <person name="Roberts K.M."/>
            <person name="Hurst M.A."/>
            <person name="Kaine B.P."/>
            <person name="Borodovsky M."/>
            <person name="Klenk H.-P."/>
            <person name="Fraser C.M."/>
            <person name="Smith H.O."/>
            <person name="Woese C.R."/>
            <person name="Venter J.C."/>
        </authorList>
    </citation>
    <scope>NUCLEOTIDE SEQUENCE [LARGE SCALE GENOMIC DNA]</scope>
    <source>
        <strain>ATCC 43067 / DSM 2661 / JAL-1 / JCM 10045 / NBRC 100440</strain>
    </source>
</reference>
<feature type="chain" id="PRO_0000106690" description="Uncharacterized protein MJ0094">
    <location>
        <begin position="1"/>
        <end position="310"/>
    </location>
</feature>
<name>Y094_METJA</name>
<protein>
    <recommendedName>
        <fullName>Uncharacterized protein MJ0094</fullName>
    </recommendedName>
</protein>
<gene>
    <name type="ordered locus">MJ0094</name>
</gene>
<keyword id="KW-1185">Reference proteome</keyword>
<dbReference type="EMBL" id="L77117">
    <property type="protein sequence ID" value="AAB98074.1"/>
    <property type="molecule type" value="Genomic_DNA"/>
</dbReference>
<dbReference type="PIR" id="F64311">
    <property type="entry name" value="F64311"/>
</dbReference>
<dbReference type="SMR" id="Q57559"/>
<dbReference type="FunCoup" id="Q57559">
    <property type="interactions" value="5"/>
</dbReference>
<dbReference type="STRING" id="243232.MJ_0094"/>
<dbReference type="PaxDb" id="243232-MJ_0094"/>
<dbReference type="EnsemblBacteria" id="AAB98074">
    <property type="protein sequence ID" value="AAB98074"/>
    <property type="gene ID" value="MJ_0094"/>
</dbReference>
<dbReference type="KEGG" id="mja:MJ_0094"/>
<dbReference type="eggNOG" id="arCOG03226">
    <property type="taxonomic scope" value="Archaea"/>
</dbReference>
<dbReference type="HOGENOM" id="CLU_890295_0_0_2"/>
<dbReference type="InParanoid" id="Q57559"/>
<dbReference type="PhylomeDB" id="Q57559"/>
<dbReference type="Proteomes" id="UP000000805">
    <property type="component" value="Chromosome"/>
</dbReference>
<dbReference type="InterPro" id="IPR026327">
    <property type="entry name" value="Me_CoM_Rdtase_prot-C-like"/>
</dbReference>
<dbReference type="InterPro" id="IPR011312">
    <property type="entry name" value="Menthan_mark_7"/>
</dbReference>
<dbReference type="NCBIfam" id="TIGR03274">
    <property type="entry name" value="methan_mark_7"/>
    <property type="match status" value="1"/>
</dbReference>
<dbReference type="Pfam" id="PF04609">
    <property type="entry name" value="MCR_C"/>
    <property type="match status" value="1"/>
</dbReference>
<dbReference type="PIRSF" id="PIRSF019164">
    <property type="entry name" value="UCP019164"/>
    <property type="match status" value="1"/>
</dbReference>
<sequence>MVILMYEIVRYEGGVYKNNIFKEWIEDIGGFVIQEHVMQLDVYMTLAIPQNELENIKEEAKKYKGKIIETPLAGTEIAVVAPSLSRHHLPHTACDISEYLRRFGAKPNMIGLARGVGRDIAQLREKERRLIEEHDLAVYVMGNFEDCIKNKTHLFDVDIPVVVTGGPEKIDIPYPYVGNLGRRSHRLRHGEEIRALRKMVEVITELINERRRELSYDPPIVPPVVVKDEIEKQVEEVYSILSPMPIVTQLDGLRVKLDYDKYADKIREVKVKNYTLGDIADIKRSEMKNYILIKIKPKSEVEFEMHKDKA</sequence>